<reference key="1">
    <citation type="journal article" date="2003" name="PLoS Biol.">
        <title>The genome sequence of Caenorhabditis briggsae: a platform for comparative genomics.</title>
        <authorList>
            <person name="Stein L.D."/>
            <person name="Bao Z."/>
            <person name="Blasiar D."/>
            <person name="Blumenthal T."/>
            <person name="Brent M.R."/>
            <person name="Chen N."/>
            <person name="Chinwalla A."/>
            <person name="Clarke L."/>
            <person name="Clee C."/>
            <person name="Coghlan A."/>
            <person name="Coulson A."/>
            <person name="D'Eustachio P."/>
            <person name="Fitch D.H.A."/>
            <person name="Fulton L.A."/>
            <person name="Fulton R.E."/>
            <person name="Griffiths-Jones S."/>
            <person name="Harris T.W."/>
            <person name="Hillier L.W."/>
            <person name="Kamath R."/>
            <person name="Kuwabara P.E."/>
            <person name="Mardis E.R."/>
            <person name="Marra M.A."/>
            <person name="Miner T.L."/>
            <person name="Minx P."/>
            <person name="Mullikin J.C."/>
            <person name="Plumb R.W."/>
            <person name="Rogers J."/>
            <person name="Schein J.E."/>
            <person name="Sohrmann M."/>
            <person name="Spieth J."/>
            <person name="Stajich J.E."/>
            <person name="Wei C."/>
            <person name="Willey D."/>
            <person name="Wilson R.K."/>
            <person name="Durbin R.M."/>
            <person name="Waterston R.H."/>
        </authorList>
    </citation>
    <scope>NUCLEOTIDE SEQUENCE [LARGE SCALE GENOMIC DNA]</scope>
    <source>
        <strain>AF16</strain>
    </source>
</reference>
<evidence type="ECO:0000250" key="1"/>
<evidence type="ECO:0000255" key="2">
    <source>
        <dbReference type="PROSITE-ProRule" id="PRU00269"/>
    </source>
</evidence>
<evidence type="ECO:0000255" key="3">
    <source>
        <dbReference type="PROSITE-ProRule" id="PRU00534"/>
    </source>
</evidence>
<evidence type="ECO:0000255" key="4">
    <source>
        <dbReference type="PROSITE-ProRule" id="PRU00535"/>
    </source>
</evidence>
<evidence type="ECO:0000256" key="5">
    <source>
        <dbReference type="SAM" id="MobiDB-lite"/>
    </source>
</evidence>
<evidence type="ECO:0000305" key="6"/>
<protein>
    <recommendedName>
        <fullName>Serine/threonine-protein kinase smg-1</fullName>
        <ecNumber>2.7.11.1</ecNumber>
    </recommendedName>
    <alternativeName>
        <fullName>Suppressor with morphogenetic effect on genitalia protein 1</fullName>
    </alternativeName>
</protein>
<feature type="chain" id="PRO_0000229793" description="Serine/threonine-protein kinase smg-1">
    <location>
        <begin position="1"/>
        <end position="2313"/>
    </location>
</feature>
<feature type="domain" description="FAT" evidence="3">
    <location>
        <begin position="1045"/>
        <end position="1528"/>
    </location>
</feature>
<feature type="repeat" description="HEAT">
    <location>
        <begin position="1478"/>
        <end position="1514"/>
    </location>
</feature>
<feature type="domain" description="PI3K/PI4K catalytic" evidence="2">
    <location>
        <begin position="1746"/>
        <end position="2091"/>
    </location>
</feature>
<feature type="domain" description="FATC" evidence="3 4">
    <location>
        <begin position="2281"/>
        <end position="2313"/>
    </location>
</feature>
<feature type="region of interest" description="Disordered" evidence="5">
    <location>
        <begin position="779"/>
        <end position="798"/>
    </location>
</feature>
<feature type="region of interest" description="G-loop" evidence="2">
    <location>
        <begin position="1752"/>
        <end position="1758"/>
    </location>
</feature>
<feature type="region of interest" description="Catalytic loop" evidence="2">
    <location>
        <begin position="1954"/>
        <end position="1962"/>
    </location>
</feature>
<feature type="region of interest" description="Activation loop" evidence="2">
    <location>
        <begin position="1974"/>
        <end position="1998"/>
    </location>
</feature>
<feature type="compositionally biased region" description="Basic and acidic residues" evidence="5">
    <location>
        <begin position="779"/>
        <end position="791"/>
    </location>
</feature>
<keyword id="KW-0067">ATP-binding</keyword>
<keyword id="KW-0963">Cytoplasm</keyword>
<keyword id="KW-0418">Kinase</keyword>
<keyword id="KW-0464">Manganese</keyword>
<keyword id="KW-0479">Metal-binding</keyword>
<keyword id="KW-0866">Nonsense-mediated mRNA decay</keyword>
<keyword id="KW-0547">Nucleotide-binding</keyword>
<keyword id="KW-1185">Reference proteome</keyword>
<keyword id="KW-0723">Serine/threonine-protein kinase</keyword>
<keyword id="KW-0808">Transferase</keyword>
<proteinExistence type="inferred from homology"/>
<sequence length="2313" mass="264720">MLTSKNNDIGNLIEIFRQRDITYKERKATLQKIEELIPKVPDLEALNTKWIYLLDNAVWPLIVKSDRMDLKSLAGKVTRHVGALLFDSPFYPEFLLWLGTLLQNTPKKNDDARADIVFSVYYIVGAISQKSENRLGKNDEEYVRKSLEWLIRVIPNSSSAVYNNCLKGIILISNTFRKVTDDLYESCLRAIVSNFPDFNSHEKNFERLLDTVNLFSDHFSKDPVLAEEMVRIIRPDIKKNGLRNTRELKKRLKLTMAIVKMAKSQQILVETNEMMCELQAELEGNGGKWSSAALITIICDLLNELLILGKNDAEMRQSVEESLGNLLKDLNLSKQNTKEKQAFFNSLAKIVKQLPAESDVKTRIHHIVFNSDTGLFNIQNDDNRIFGHNTIYRDLVNLISVLLTPTSLSHLQATYTDLRKIMMESMSKLKQSERWHESILLLFFSALQGISCAKSSLIVMIGIRPSIFELFCDELPLTEYWLASNHPEVYHIFITILVGHLKAHDFYVSQSDYLVHGETPTGHAYGQTKREYVRKQVIALHKIIGGFGNRLWKKTRFLISTWLHSLVVIARDQKISAESFRLKEWVRLRNTVIQHSVLDWNNESINQALTVLSTVTNWSALPLELNKDITDKTKKATWKEATTIWESGDFKTYIRQSLSTTYQMSQERQQKQIGSTSFGAEEFNLVTNFLLKQIVPTTFKKGPYVWMDEVLETAIQGCKNISQEKSDVPETFMEKWDWIINQTANFCIVNKMKTPLGKPMQTFAAFENEIKRLAKEVINRKSSDKKPKSTTEDVPPPATPPLKFSIQWLRVHLLLKLIEVLEKIMISSIRGGSSIFNLTEIPVTARQFFIMNSSSCEVWLNRVYYPALIVAYFNGYYGLVIRFGSNALNHYARQKGSDEKMITNGVCTACLMSLSMAVLGEPMEIVGLRRRVREEFGTEMGQKLMEALGEMASARYEIALVQLEAILVVDSSINETLRIIIQIAITDMLNRIRLPDAVRYYKKTLFGEDEEAQVAEDFRSIEMLTKFEKLNYGVAEKRQVVDWSARERLQLVESAYSQTMKRNELLELQKEMSAMGALALSADSSCKLYSDISSTSLVIANLVDRMTGTSHWKNQLTDVEMFDRAEEGNEGDKLTICRKLMHWGRHMKHHRGQSFAAHGEIIRFSRKTSNCELAFFHINSAIRGEKLEAWQRLEVERQRLKLVKSQHFDVRVREMNEVFGSLADVFSTSIEMKQKFQNLDDQTKDLMVANGYLSDIAKREEHMSRASIQLADFFDTLPTIDTVLTPNLYNTIIWSEIQSRSNSLSCGYAGLVGALYNLSADLCPSLAKAHLKMAKWTYEMAKIENFPNISPFALYQFGQTAQENEELWRSLDATSLVNLEKQVRKIVPDAMRASVLLSPNNPYLLLWEAASAHRRKFLCITVSSYFQFIHNMSGDFECLPYSKREETTLATLRILEMLVKHGEVLVDVINDGLSRTNVHVWKEILPQLFARLSHPSDHIRKTLVDLISRVCTAAPHAVVFQVVSGAASSTEVSDLEEQQNDDRNRVRACCEQLETKMAQSYPNLVRDVRQFVAELERINLLNEEKWSVVLGTMEHEMEKRLALIKAENAKTDFSMHLMPKQKDEIISKKTKLLTRQIFDVLDELYEKTIVAQPETENEKEFFNTFSEMLTKAHTESKNNRYNSPEASWAPFKNLVSNFAHRTNKKGMQTFQTADISQYLATLGKSCVPMPGQESVEFDRVVSIARVADNVTILPTKTRPKKLGFIGSDGKQLAFLFKGREDLHLDERVMQFLRLCNVMLQSEKGKSRQIAEYQAHHYAVIPLGPRSGLIKWVEGATPIFHIYRKWQMKEKALKQATKKNGETVPEIEKPTNMYHNMIRQAFTAHNIDAIIASDRSKWPAQILEEVFDGLCSKTPTDLISREIWMRANDSTAWWAVTKRYARSLAVMSMVGSVLGLGDRHLDNLLVDLKYGHVVHIDYNICFDKGKILRIPETVPFRLSRNMRHALGPSDMYGTFRESCVHVLSTLRSGHQVLTMLLDAFVFDPLVDWTSHDNISTSGGVSLALQLAVYGSSWKAKARERLTDTIELFQLRVTELQALWMSNREDLYHWMKQVTDCLLAEQSIMGMNGAYAQQRVKAGTELREAVARHQALAKEFRPLIRVIGKEKEEFADYLKFYKQAFIDPLLKGHSALRHELDIDTCVQNFNIVMQNIDVVFMSLISLSTMPIDSVSSRASQKQFNAPPGLENVWVLQQEQQENSQAREVVRRVERRLNGWLDGSAPDRKLSPREEADVLIAEATSSANLAQMYEGWTAWV</sequence>
<gene>
    <name type="primary">smg-1</name>
    <name type="ORF">CBG12735</name>
</gene>
<organism>
    <name type="scientific">Caenorhabditis briggsae</name>
    <dbReference type="NCBI Taxonomy" id="6238"/>
    <lineage>
        <taxon>Eukaryota</taxon>
        <taxon>Metazoa</taxon>
        <taxon>Ecdysozoa</taxon>
        <taxon>Nematoda</taxon>
        <taxon>Chromadorea</taxon>
        <taxon>Rhabditida</taxon>
        <taxon>Rhabditina</taxon>
        <taxon>Rhabditomorpha</taxon>
        <taxon>Rhabditoidea</taxon>
        <taxon>Rhabditidae</taxon>
        <taxon>Peloderinae</taxon>
        <taxon>Caenorhabditis</taxon>
    </lineage>
</organism>
<dbReference type="EC" id="2.7.11.1"/>
<dbReference type="EMBL" id="HE600940">
    <property type="protein sequence ID" value="CAP31671.3"/>
    <property type="molecule type" value="Genomic_DNA"/>
</dbReference>
<dbReference type="SMR" id="Q61CW2"/>
<dbReference type="FunCoup" id="Q61CW2">
    <property type="interactions" value="2564"/>
</dbReference>
<dbReference type="STRING" id="6238.Q61CW2"/>
<dbReference type="WormBase" id="CBG12735a">
    <property type="protein sequence ID" value="CBP49649"/>
    <property type="gene ID" value="WBGene00033641"/>
    <property type="gene designation" value="Cbr-smg-1"/>
</dbReference>
<dbReference type="eggNOG" id="KOG0891">
    <property type="taxonomic scope" value="Eukaryota"/>
</dbReference>
<dbReference type="HOGENOM" id="CLU_001279_1_0_1"/>
<dbReference type="InParanoid" id="Q61CW2"/>
<dbReference type="OMA" id="AFECHFT"/>
<dbReference type="Proteomes" id="UP000008549">
    <property type="component" value="Unassembled WGS sequence"/>
</dbReference>
<dbReference type="GO" id="GO:0005737">
    <property type="term" value="C:cytoplasm"/>
    <property type="evidence" value="ECO:0000318"/>
    <property type="project" value="GO_Central"/>
</dbReference>
<dbReference type="GO" id="GO:0005634">
    <property type="term" value="C:nucleus"/>
    <property type="evidence" value="ECO:0000318"/>
    <property type="project" value="GO_Central"/>
</dbReference>
<dbReference type="GO" id="GO:0038201">
    <property type="term" value="C:TOR complex"/>
    <property type="evidence" value="ECO:0000318"/>
    <property type="project" value="GO_Central"/>
</dbReference>
<dbReference type="GO" id="GO:0005524">
    <property type="term" value="F:ATP binding"/>
    <property type="evidence" value="ECO:0007669"/>
    <property type="project" value="UniProtKB-KW"/>
</dbReference>
<dbReference type="GO" id="GO:0046872">
    <property type="term" value="F:metal ion binding"/>
    <property type="evidence" value="ECO:0007669"/>
    <property type="project" value="UniProtKB-KW"/>
</dbReference>
<dbReference type="GO" id="GO:0106310">
    <property type="term" value="F:protein serine kinase activity"/>
    <property type="evidence" value="ECO:0007669"/>
    <property type="project" value="RHEA"/>
</dbReference>
<dbReference type="GO" id="GO:0004674">
    <property type="term" value="F:protein serine/threonine kinase activity"/>
    <property type="evidence" value="ECO:0000318"/>
    <property type="project" value="GO_Central"/>
</dbReference>
<dbReference type="GO" id="GO:0016242">
    <property type="term" value="P:negative regulation of macroautophagy"/>
    <property type="evidence" value="ECO:0000318"/>
    <property type="project" value="GO_Central"/>
</dbReference>
<dbReference type="GO" id="GO:0000184">
    <property type="term" value="P:nuclear-transcribed mRNA catabolic process, nonsense-mediated decay"/>
    <property type="evidence" value="ECO:0007669"/>
    <property type="project" value="UniProtKB-KW"/>
</dbReference>
<dbReference type="GO" id="GO:0031929">
    <property type="term" value="P:TOR signaling"/>
    <property type="evidence" value="ECO:0000318"/>
    <property type="project" value="GO_Central"/>
</dbReference>
<dbReference type="CDD" id="cd05170">
    <property type="entry name" value="PIKKc_SMG1"/>
    <property type="match status" value="1"/>
</dbReference>
<dbReference type="FunFam" id="1.10.1070.11:FF:000045">
    <property type="entry name" value="Serine/threonine-protein kinase smg-1"/>
    <property type="match status" value="1"/>
</dbReference>
<dbReference type="FunFam" id="3.30.1010.10:FF:000026">
    <property type="entry name" value="Serine/threonine-protein kinase smg-1"/>
    <property type="match status" value="1"/>
</dbReference>
<dbReference type="Gene3D" id="1.10.1070.11">
    <property type="entry name" value="Phosphatidylinositol 3-/4-kinase, catalytic domain"/>
    <property type="match status" value="1"/>
</dbReference>
<dbReference type="Gene3D" id="3.30.1010.10">
    <property type="entry name" value="Phosphatidylinositol 3-kinase Catalytic Subunit, Chain A, domain 4"/>
    <property type="match status" value="1"/>
</dbReference>
<dbReference type="InterPro" id="IPR016024">
    <property type="entry name" value="ARM-type_fold"/>
</dbReference>
<dbReference type="InterPro" id="IPR050517">
    <property type="entry name" value="DDR_Repair_Kinase"/>
</dbReference>
<dbReference type="InterPro" id="IPR003152">
    <property type="entry name" value="FATC_dom"/>
</dbReference>
<dbReference type="InterPro" id="IPR011009">
    <property type="entry name" value="Kinase-like_dom_sf"/>
</dbReference>
<dbReference type="InterPro" id="IPR000403">
    <property type="entry name" value="PI3/4_kinase_cat_dom"/>
</dbReference>
<dbReference type="InterPro" id="IPR036940">
    <property type="entry name" value="PI3/4_kinase_cat_sf"/>
</dbReference>
<dbReference type="InterPro" id="IPR014009">
    <property type="entry name" value="PIK_FAT"/>
</dbReference>
<dbReference type="InterPro" id="IPR031559">
    <property type="entry name" value="SMG1"/>
</dbReference>
<dbReference type="InterPro" id="IPR039414">
    <property type="entry name" value="SMG1_PIKKc"/>
</dbReference>
<dbReference type="PANTHER" id="PTHR11139">
    <property type="entry name" value="ATAXIA TELANGIECTASIA MUTATED ATM -RELATED"/>
    <property type="match status" value="1"/>
</dbReference>
<dbReference type="PANTHER" id="PTHR11139:SF119">
    <property type="entry name" value="SERINE_THREONINE-PROTEIN KINASE SMG1"/>
    <property type="match status" value="1"/>
</dbReference>
<dbReference type="Pfam" id="PF02260">
    <property type="entry name" value="FATC"/>
    <property type="match status" value="1"/>
</dbReference>
<dbReference type="Pfam" id="PF00454">
    <property type="entry name" value="PI3_PI4_kinase"/>
    <property type="match status" value="1"/>
</dbReference>
<dbReference type="Pfam" id="PF15785">
    <property type="entry name" value="SMG1"/>
    <property type="match status" value="1"/>
</dbReference>
<dbReference type="SMART" id="SM01343">
    <property type="entry name" value="FATC"/>
    <property type="match status" value="1"/>
</dbReference>
<dbReference type="SMART" id="SM00146">
    <property type="entry name" value="PI3Kc"/>
    <property type="match status" value="1"/>
</dbReference>
<dbReference type="SUPFAM" id="SSF48371">
    <property type="entry name" value="ARM repeat"/>
    <property type="match status" value="1"/>
</dbReference>
<dbReference type="SUPFAM" id="SSF56112">
    <property type="entry name" value="Protein kinase-like (PK-like)"/>
    <property type="match status" value="1"/>
</dbReference>
<dbReference type="PROSITE" id="PS51189">
    <property type="entry name" value="FAT"/>
    <property type="match status" value="1"/>
</dbReference>
<dbReference type="PROSITE" id="PS51190">
    <property type="entry name" value="FATC"/>
    <property type="match status" value="1"/>
</dbReference>
<dbReference type="PROSITE" id="PS50290">
    <property type="entry name" value="PI3_4_KINASE_3"/>
    <property type="match status" value="1"/>
</dbReference>
<comment type="function">
    <text evidence="1">Serine/threonine protein kinase involved in mRNA surveillance. Recognizes the substrate consensus sequence [ST]-Q. Involved in nonsense-mediated decay (NMD) of mRNAs containing premature stop codons by phosphorylating smg-2 (By similarity).</text>
</comment>
<comment type="catalytic activity">
    <reaction>
        <text>L-seryl-[protein] + ATP = O-phospho-L-seryl-[protein] + ADP + H(+)</text>
        <dbReference type="Rhea" id="RHEA:17989"/>
        <dbReference type="Rhea" id="RHEA-COMP:9863"/>
        <dbReference type="Rhea" id="RHEA-COMP:11604"/>
        <dbReference type="ChEBI" id="CHEBI:15378"/>
        <dbReference type="ChEBI" id="CHEBI:29999"/>
        <dbReference type="ChEBI" id="CHEBI:30616"/>
        <dbReference type="ChEBI" id="CHEBI:83421"/>
        <dbReference type="ChEBI" id="CHEBI:456216"/>
        <dbReference type="EC" id="2.7.11.1"/>
    </reaction>
</comment>
<comment type="catalytic activity">
    <reaction>
        <text>L-threonyl-[protein] + ATP = O-phospho-L-threonyl-[protein] + ADP + H(+)</text>
        <dbReference type="Rhea" id="RHEA:46608"/>
        <dbReference type="Rhea" id="RHEA-COMP:11060"/>
        <dbReference type="Rhea" id="RHEA-COMP:11605"/>
        <dbReference type="ChEBI" id="CHEBI:15378"/>
        <dbReference type="ChEBI" id="CHEBI:30013"/>
        <dbReference type="ChEBI" id="CHEBI:30616"/>
        <dbReference type="ChEBI" id="CHEBI:61977"/>
        <dbReference type="ChEBI" id="CHEBI:456216"/>
        <dbReference type="EC" id="2.7.11.1"/>
    </reaction>
</comment>
<comment type="cofactor">
    <cofactor evidence="1">
        <name>Mn(2+)</name>
        <dbReference type="ChEBI" id="CHEBI:29035"/>
    </cofactor>
</comment>
<comment type="subunit">
    <text evidence="1">Component of a post-splicing multiprotein NMD complex.</text>
</comment>
<comment type="subcellular location">
    <subcellularLocation>
        <location evidence="1">Cytoplasm</location>
    </subcellularLocation>
</comment>
<comment type="similarity">
    <text evidence="6">Belongs to the PI3/PI4-kinase family.</text>
</comment>
<accession>Q61CW2</accession>
<accession>A8XGG5</accession>
<name>SMG1_CAEBR</name>